<keyword id="KW-0150">Chloroplast</keyword>
<keyword id="KW-0472">Membrane</keyword>
<keyword id="KW-0520">NAD</keyword>
<keyword id="KW-0521">NADP</keyword>
<keyword id="KW-0934">Plastid</keyword>
<keyword id="KW-0618">Plastoquinone</keyword>
<keyword id="KW-0874">Quinone</keyword>
<keyword id="KW-0793">Thylakoid</keyword>
<keyword id="KW-0809">Transit peptide</keyword>
<keyword id="KW-1278">Translocase</keyword>
<keyword id="KW-0813">Transport</keyword>
<organism>
    <name type="scientific">Populus jackii</name>
    <name type="common">Balm of Gilead</name>
    <name type="synonym">Populus deltoides x Populus balsamifera</name>
    <dbReference type="NCBI Taxonomy" id="640484"/>
    <lineage>
        <taxon>Eukaryota</taxon>
        <taxon>Viridiplantae</taxon>
        <taxon>Streptophyta</taxon>
        <taxon>Embryophyta</taxon>
        <taxon>Tracheophyta</taxon>
        <taxon>Spermatophyta</taxon>
        <taxon>Magnoliopsida</taxon>
        <taxon>eudicotyledons</taxon>
        <taxon>Gunneridae</taxon>
        <taxon>Pentapetalae</taxon>
        <taxon>rosids</taxon>
        <taxon>fabids</taxon>
        <taxon>Malpighiales</taxon>
        <taxon>Salicaceae</taxon>
        <taxon>Saliceae</taxon>
        <taxon>Populus</taxon>
    </lineage>
</organism>
<feature type="transit peptide" description="Chloroplast" evidence="3">
    <location>
        <begin position="1"/>
        <end position="21"/>
    </location>
</feature>
<feature type="chain" id="PRO_0000352664" description="NAD(P)H-quinone oxidoreductase subunit M, chloroplastic">
    <location>
        <begin position="22"/>
        <end position="203"/>
    </location>
</feature>
<feature type="region of interest" description="Disordered" evidence="4">
    <location>
        <begin position="34"/>
        <end position="61"/>
    </location>
</feature>
<feature type="compositionally biased region" description="Low complexity" evidence="4">
    <location>
        <begin position="34"/>
        <end position="48"/>
    </location>
</feature>
<gene>
    <name evidence="5" type="primary">ndhM</name>
    <name evidence="1" type="synonym">NDH-M</name>
</gene>
<name>NDHM_POPJC</name>
<evidence type="ECO:0000250" key="1">
    <source>
        <dbReference type="UniProtKB" id="Q2V2S7"/>
    </source>
</evidence>
<evidence type="ECO:0000250" key="2">
    <source>
        <dbReference type="UniProtKB" id="Q9CAC5"/>
    </source>
</evidence>
<evidence type="ECO:0000255" key="3"/>
<evidence type="ECO:0000256" key="4">
    <source>
        <dbReference type="SAM" id="MobiDB-lite"/>
    </source>
</evidence>
<evidence type="ECO:0000305" key="5"/>
<protein>
    <recommendedName>
        <fullName evidence="5">NAD(P)H-quinone oxidoreductase subunit M, chloroplastic</fullName>
        <ecNumber evidence="5">7.1.1.-</ecNumber>
    </recommendedName>
    <alternativeName>
        <fullName evidence="5">NAD(P)H dehydrogenase subunit M</fullName>
        <shortName evidence="5">NDH subunit M</shortName>
        <shortName evidence="1">NDH-M</shortName>
    </alternativeName>
    <alternativeName>
        <fullName evidence="5">NADH-plastoquinone oxidoreductase subunit M</fullName>
    </alternativeName>
</protein>
<accession>A9PJQ8</accession>
<proteinExistence type="evidence at transcript level"/>
<dbReference type="EC" id="7.1.1.-" evidence="5"/>
<dbReference type="EMBL" id="EF148649">
    <property type="protein sequence ID" value="ABK96611.1"/>
    <property type="molecule type" value="mRNA"/>
</dbReference>
<dbReference type="SMR" id="A9PJQ8"/>
<dbReference type="GO" id="GO:0009535">
    <property type="term" value="C:chloroplast thylakoid membrane"/>
    <property type="evidence" value="ECO:0007669"/>
    <property type="project" value="UniProtKB-SubCell"/>
</dbReference>
<dbReference type="GO" id="GO:0016655">
    <property type="term" value="F:oxidoreductase activity, acting on NAD(P)H, quinone or similar compound as acceptor"/>
    <property type="evidence" value="ECO:0007669"/>
    <property type="project" value="InterPro"/>
</dbReference>
<dbReference type="GO" id="GO:0048038">
    <property type="term" value="F:quinone binding"/>
    <property type="evidence" value="ECO:0007669"/>
    <property type="project" value="UniProtKB-KW"/>
</dbReference>
<dbReference type="InterPro" id="IPR018922">
    <property type="entry name" value="NdhM"/>
</dbReference>
<dbReference type="PANTHER" id="PTHR36900">
    <property type="entry name" value="NAD(P)H-QUINONE OXIDOREDUCTASE SUBUNIT M, CHLOROPLASTIC"/>
    <property type="match status" value="1"/>
</dbReference>
<dbReference type="PANTHER" id="PTHR36900:SF1">
    <property type="entry name" value="NAD(P)H-QUINONE OXIDOREDUCTASE SUBUNIT M, CHLOROPLASTIC"/>
    <property type="match status" value="1"/>
</dbReference>
<dbReference type="Pfam" id="PF10664">
    <property type="entry name" value="NdhM"/>
    <property type="match status" value="1"/>
</dbReference>
<sequence length="203" mass="23538">MAASSSYMACAKFSMLGWLGGRRELKMRRVISVSPQEQAEVQESQEVNAQEEEKVKQPVQPRPVEPQVNVKSKNMGREYGGQWLSSVTRHVRIYAAYIDPETCEFDQTQTDKLTLILDPTDEFVWTDETCYKVYSYFQELVDHYEGAPLTEYTLRLIGSDIEHYIRKLLYDGEIKYNMNARVLNFSMGKPRILFNNDGQLQDV</sequence>
<comment type="function">
    <text evidence="5">NDH shuttles electrons from NAD(P)H:plastoquinone, via FMN and iron-sulfur (Fe-S) centers, to quinones in the photosynthetic chain and possibly in a chloroplast respiratory chain. The immediate electron acceptor for the enzyme in this species is believed to be plastoquinone. Couples the redox reaction to proton translocation, and thus conserves the redox energy in a proton gradient.</text>
</comment>
<comment type="catalytic activity">
    <reaction evidence="5">
        <text>a plastoquinone + NADH + (n+1) H(+)(in) = a plastoquinol + NAD(+) + n H(+)(out)</text>
        <dbReference type="Rhea" id="RHEA:42608"/>
        <dbReference type="Rhea" id="RHEA-COMP:9561"/>
        <dbReference type="Rhea" id="RHEA-COMP:9562"/>
        <dbReference type="ChEBI" id="CHEBI:15378"/>
        <dbReference type="ChEBI" id="CHEBI:17757"/>
        <dbReference type="ChEBI" id="CHEBI:57540"/>
        <dbReference type="ChEBI" id="CHEBI:57945"/>
        <dbReference type="ChEBI" id="CHEBI:62192"/>
    </reaction>
</comment>
<comment type="catalytic activity">
    <reaction evidence="5">
        <text>a plastoquinone + NADPH + (n+1) H(+)(in) = a plastoquinol + NADP(+) + n H(+)(out)</text>
        <dbReference type="Rhea" id="RHEA:42612"/>
        <dbReference type="Rhea" id="RHEA-COMP:9561"/>
        <dbReference type="Rhea" id="RHEA-COMP:9562"/>
        <dbReference type="ChEBI" id="CHEBI:15378"/>
        <dbReference type="ChEBI" id="CHEBI:17757"/>
        <dbReference type="ChEBI" id="CHEBI:57783"/>
        <dbReference type="ChEBI" id="CHEBI:58349"/>
        <dbReference type="ChEBI" id="CHEBI:62192"/>
    </reaction>
</comment>
<comment type="subunit">
    <text evidence="1">Part of the chloroplast NDH complex, composed of a mixture of chloroplast and nucleus encoded subunits. Component of the NDH subcomplex A, at least composed of ndhH, ndhI, ndhJ, ndhK, ndhL, ndhM, ndhN and ndhO.</text>
</comment>
<comment type="subcellular location">
    <subcellularLocation>
        <location evidence="2">Plastid</location>
        <location evidence="2">Chloroplast thylakoid membrane</location>
        <topology evidence="5">Peripheral membrane protein</topology>
        <orientation evidence="5">Stromal side</orientation>
    </subcellularLocation>
</comment>
<comment type="similarity">
    <text evidence="5">Belongs to the NDH complex subunit M family.</text>
</comment>
<reference key="1">
    <citation type="submission" date="2006-11" db="EMBL/GenBank/DDBJ databases">
        <title>The poplar transcriptome: analysis of ca. 4,700 sequence-verified full-length cDNAs.</title>
        <authorList>
            <person name="Ralph S.G."/>
            <person name="Chun H.J.E."/>
            <person name="Cooper D."/>
            <person name="Kirkpatrick R."/>
            <person name="Palmquist D."/>
            <person name="Wynhoven B."/>
            <person name="Kolosova N."/>
            <person name="Oddy C."/>
            <person name="Jancsik S."/>
            <person name="Douglas C.J."/>
            <person name="Liu J."/>
            <person name="Butterfield Y.S.N."/>
            <person name="Stott J."/>
            <person name="Yang G."/>
            <person name="Holt R.A."/>
            <person name="Siddiqui A."/>
            <person name="Jones S.J.M."/>
            <person name="Marra M.A."/>
            <person name="Ritland K."/>
            <person name="Bohlmann J."/>
        </authorList>
    </citation>
    <scope>NUCLEOTIDE SEQUENCE [LARGE SCALE MRNA]</scope>
    <source>
        <strain>cv. H11-11</strain>
        <tissue>Leaf</tissue>
    </source>
</reference>